<comment type="similarity">
    <text evidence="1">Belongs to the universal ribosomal protein uL29 family.</text>
</comment>
<evidence type="ECO:0000255" key="1">
    <source>
        <dbReference type="HAMAP-Rule" id="MF_00374"/>
    </source>
</evidence>
<evidence type="ECO:0000305" key="2"/>
<sequence>MKAKELREKSVEELNTELLNLLREQFNLRMQAASGQLQQSHLLKQVRRDVARVKTLLTEKAGA</sequence>
<feature type="chain" id="PRO_1000121815" description="Large ribosomal subunit protein uL29">
    <location>
        <begin position="1"/>
        <end position="63"/>
    </location>
</feature>
<organism>
    <name type="scientific">Salmonella schwarzengrund (strain CVM19633)</name>
    <dbReference type="NCBI Taxonomy" id="439843"/>
    <lineage>
        <taxon>Bacteria</taxon>
        <taxon>Pseudomonadati</taxon>
        <taxon>Pseudomonadota</taxon>
        <taxon>Gammaproteobacteria</taxon>
        <taxon>Enterobacterales</taxon>
        <taxon>Enterobacteriaceae</taxon>
        <taxon>Salmonella</taxon>
    </lineage>
</organism>
<name>RL29_SALSV</name>
<dbReference type="EMBL" id="CP001127">
    <property type="protein sequence ID" value="ACF92635.1"/>
    <property type="molecule type" value="Genomic_DNA"/>
</dbReference>
<dbReference type="RefSeq" id="WP_000644742.1">
    <property type="nucleotide sequence ID" value="NC_011094.1"/>
</dbReference>
<dbReference type="SMR" id="B4TXD4"/>
<dbReference type="GeneID" id="93035739"/>
<dbReference type="KEGG" id="sew:SeSA_A3628"/>
<dbReference type="HOGENOM" id="CLU_158491_1_2_6"/>
<dbReference type="Proteomes" id="UP000001865">
    <property type="component" value="Chromosome"/>
</dbReference>
<dbReference type="GO" id="GO:0022625">
    <property type="term" value="C:cytosolic large ribosomal subunit"/>
    <property type="evidence" value="ECO:0007669"/>
    <property type="project" value="TreeGrafter"/>
</dbReference>
<dbReference type="GO" id="GO:0003735">
    <property type="term" value="F:structural constituent of ribosome"/>
    <property type="evidence" value="ECO:0007669"/>
    <property type="project" value="InterPro"/>
</dbReference>
<dbReference type="GO" id="GO:0006412">
    <property type="term" value="P:translation"/>
    <property type="evidence" value="ECO:0007669"/>
    <property type="project" value="UniProtKB-UniRule"/>
</dbReference>
<dbReference type="CDD" id="cd00427">
    <property type="entry name" value="Ribosomal_L29_HIP"/>
    <property type="match status" value="1"/>
</dbReference>
<dbReference type="Gene3D" id="6.10.140.1970">
    <property type="match status" value="1"/>
</dbReference>
<dbReference type="HAMAP" id="MF_00374">
    <property type="entry name" value="Ribosomal_uL29"/>
    <property type="match status" value="1"/>
</dbReference>
<dbReference type="InterPro" id="IPR050063">
    <property type="entry name" value="Ribosomal_protein_uL29"/>
</dbReference>
<dbReference type="InterPro" id="IPR001854">
    <property type="entry name" value="Ribosomal_uL29"/>
</dbReference>
<dbReference type="InterPro" id="IPR018254">
    <property type="entry name" value="Ribosomal_uL29_CS"/>
</dbReference>
<dbReference type="InterPro" id="IPR036049">
    <property type="entry name" value="Ribosomal_uL29_sf"/>
</dbReference>
<dbReference type="NCBIfam" id="TIGR00012">
    <property type="entry name" value="L29"/>
    <property type="match status" value="1"/>
</dbReference>
<dbReference type="PANTHER" id="PTHR10916">
    <property type="entry name" value="60S RIBOSOMAL PROTEIN L35/50S RIBOSOMAL PROTEIN L29"/>
    <property type="match status" value="1"/>
</dbReference>
<dbReference type="PANTHER" id="PTHR10916:SF0">
    <property type="entry name" value="LARGE RIBOSOMAL SUBUNIT PROTEIN UL29C"/>
    <property type="match status" value="1"/>
</dbReference>
<dbReference type="Pfam" id="PF00831">
    <property type="entry name" value="Ribosomal_L29"/>
    <property type="match status" value="1"/>
</dbReference>
<dbReference type="SUPFAM" id="SSF46561">
    <property type="entry name" value="Ribosomal protein L29 (L29p)"/>
    <property type="match status" value="1"/>
</dbReference>
<dbReference type="PROSITE" id="PS00579">
    <property type="entry name" value="RIBOSOMAL_L29"/>
    <property type="match status" value="1"/>
</dbReference>
<protein>
    <recommendedName>
        <fullName evidence="1">Large ribosomal subunit protein uL29</fullName>
    </recommendedName>
    <alternativeName>
        <fullName evidence="2">50S ribosomal protein L29</fullName>
    </alternativeName>
</protein>
<proteinExistence type="inferred from homology"/>
<gene>
    <name evidence="1" type="primary">rpmC</name>
    <name type="ordered locus">SeSA_A3628</name>
</gene>
<keyword id="KW-0687">Ribonucleoprotein</keyword>
<keyword id="KW-0689">Ribosomal protein</keyword>
<reference key="1">
    <citation type="journal article" date="2011" name="J. Bacteriol.">
        <title>Comparative genomics of 28 Salmonella enterica isolates: evidence for CRISPR-mediated adaptive sublineage evolution.</title>
        <authorList>
            <person name="Fricke W.F."/>
            <person name="Mammel M.K."/>
            <person name="McDermott P.F."/>
            <person name="Tartera C."/>
            <person name="White D.G."/>
            <person name="Leclerc J.E."/>
            <person name="Ravel J."/>
            <person name="Cebula T.A."/>
        </authorList>
    </citation>
    <scope>NUCLEOTIDE SEQUENCE [LARGE SCALE GENOMIC DNA]</scope>
    <source>
        <strain>CVM19633</strain>
    </source>
</reference>
<accession>B4TXD4</accession>